<reference key="1">
    <citation type="journal article" date="2008" name="DNA Res.">
        <title>Determination of the genome sequence of Porphyromonas gingivalis strain ATCC 33277 and genomic comparison with strain W83 revealed extensive genome rearrangements in P. gingivalis.</title>
        <authorList>
            <person name="Naito M."/>
            <person name="Hirakawa H."/>
            <person name="Yamashita A."/>
            <person name="Ohara N."/>
            <person name="Shoji M."/>
            <person name="Yukitake H."/>
            <person name="Nakayama K."/>
            <person name="Toh H."/>
            <person name="Yoshimura F."/>
            <person name="Kuhara S."/>
            <person name="Hattori M."/>
            <person name="Hayashi T."/>
            <person name="Nakayama K."/>
        </authorList>
    </citation>
    <scope>NUCLEOTIDE SEQUENCE [LARGE SCALE GENOMIC DNA]</scope>
    <source>
        <strain>ATCC 33277 / DSM 20709 / CIP 103683 / JCM 12257 / NCTC 11834 / 2561</strain>
    </source>
</reference>
<proteinExistence type="inferred from homology"/>
<dbReference type="EMBL" id="AP009380">
    <property type="protein sequence ID" value="BAG34375.1"/>
    <property type="molecule type" value="Genomic_DNA"/>
</dbReference>
<dbReference type="RefSeq" id="WP_004583586.1">
    <property type="nucleotide sequence ID" value="NZ_CP025930.1"/>
</dbReference>
<dbReference type="SMR" id="B2RLY0"/>
<dbReference type="GeneID" id="57239584"/>
<dbReference type="KEGG" id="pgn:PGN_1856"/>
<dbReference type="eggNOG" id="COG0094">
    <property type="taxonomic scope" value="Bacteria"/>
</dbReference>
<dbReference type="HOGENOM" id="CLU_061015_2_1_10"/>
<dbReference type="OrthoDB" id="9806626at2"/>
<dbReference type="BioCyc" id="PGIN431947:G1G2V-2070-MONOMER"/>
<dbReference type="Proteomes" id="UP000008842">
    <property type="component" value="Chromosome"/>
</dbReference>
<dbReference type="GO" id="GO:1990904">
    <property type="term" value="C:ribonucleoprotein complex"/>
    <property type="evidence" value="ECO:0007669"/>
    <property type="project" value="UniProtKB-KW"/>
</dbReference>
<dbReference type="GO" id="GO:0005840">
    <property type="term" value="C:ribosome"/>
    <property type="evidence" value="ECO:0007669"/>
    <property type="project" value="UniProtKB-KW"/>
</dbReference>
<dbReference type="GO" id="GO:0019843">
    <property type="term" value="F:rRNA binding"/>
    <property type="evidence" value="ECO:0007669"/>
    <property type="project" value="UniProtKB-UniRule"/>
</dbReference>
<dbReference type="GO" id="GO:0003735">
    <property type="term" value="F:structural constituent of ribosome"/>
    <property type="evidence" value="ECO:0007669"/>
    <property type="project" value="InterPro"/>
</dbReference>
<dbReference type="GO" id="GO:0000049">
    <property type="term" value="F:tRNA binding"/>
    <property type="evidence" value="ECO:0007669"/>
    <property type="project" value="UniProtKB-UniRule"/>
</dbReference>
<dbReference type="GO" id="GO:0006412">
    <property type="term" value="P:translation"/>
    <property type="evidence" value="ECO:0007669"/>
    <property type="project" value="UniProtKB-UniRule"/>
</dbReference>
<dbReference type="FunFam" id="3.30.1440.10:FF:000001">
    <property type="entry name" value="50S ribosomal protein L5"/>
    <property type="match status" value="1"/>
</dbReference>
<dbReference type="Gene3D" id="3.30.1440.10">
    <property type="match status" value="1"/>
</dbReference>
<dbReference type="HAMAP" id="MF_01333_B">
    <property type="entry name" value="Ribosomal_uL5_B"/>
    <property type="match status" value="1"/>
</dbReference>
<dbReference type="InterPro" id="IPR002132">
    <property type="entry name" value="Ribosomal_uL5"/>
</dbReference>
<dbReference type="InterPro" id="IPR020930">
    <property type="entry name" value="Ribosomal_uL5_bac-type"/>
</dbReference>
<dbReference type="InterPro" id="IPR031309">
    <property type="entry name" value="Ribosomal_uL5_C"/>
</dbReference>
<dbReference type="InterPro" id="IPR022803">
    <property type="entry name" value="Ribosomal_uL5_dom_sf"/>
</dbReference>
<dbReference type="InterPro" id="IPR031310">
    <property type="entry name" value="Ribosomal_uL5_N"/>
</dbReference>
<dbReference type="NCBIfam" id="NF000585">
    <property type="entry name" value="PRK00010.1"/>
    <property type="match status" value="1"/>
</dbReference>
<dbReference type="PANTHER" id="PTHR11994">
    <property type="entry name" value="60S RIBOSOMAL PROTEIN L11-RELATED"/>
    <property type="match status" value="1"/>
</dbReference>
<dbReference type="Pfam" id="PF00281">
    <property type="entry name" value="Ribosomal_L5"/>
    <property type="match status" value="1"/>
</dbReference>
<dbReference type="Pfam" id="PF00673">
    <property type="entry name" value="Ribosomal_L5_C"/>
    <property type="match status" value="1"/>
</dbReference>
<dbReference type="PIRSF" id="PIRSF002161">
    <property type="entry name" value="Ribosomal_L5"/>
    <property type="match status" value="1"/>
</dbReference>
<dbReference type="SUPFAM" id="SSF55282">
    <property type="entry name" value="RL5-like"/>
    <property type="match status" value="1"/>
</dbReference>
<keyword id="KW-0687">Ribonucleoprotein</keyword>
<keyword id="KW-0689">Ribosomal protein</keyword>
<keyword id="KW-0694">RNA-binding</keyword>
<keyword id="KW-0699">rRNA-binding</keyword>
<keyword id="KW-0820">tRNA-binding</keyword>
<evidence type="ECO:0000255" key="1">
    <source>
        <dbReference type="HAMAP-Rule" id="MF_01333"/>
    </source>
</evidence>
<evidence type="ECO:0000305" key="2"/>
<organism>
    <name type="scientific">Porphyromonas gingivalis (strain ATCC 33277 / DSM 20709 / CIP 103683 / JCM 12257 / NCTC 11834 / 2561)</name>
    <dbReference type="NCBI Taxonomy" id="431947"/>
    <lineage>
        <taxon>Bacteria</taxon>
        <taxon>Pseudomonadati</taxon>
        <taxon>Bacteroidota</taxon>
        <taxon>Bacteroidia</taxon>
        <taxon>Bacteroidales</taxon>
        <taxon>Porphyromonadaceae</taxon>
        <taxon>Porphyromonas</taxon>
    </lineage>
</organism>
<gene>
    <name evidence="1" type="primary">rplE</name>
    <name type="ordered locus">PGN_1856</name>
</gene>
<sequence>MSATANLKKDYQERIVPALMKQFGYTSVMQVPVLKKIVINQGLGMATGDKKIIDVAVSELTAITGQKAVPTVSKKDISNFKLRKKMPIGVMVTLRREQMYEFLERLVRIALPRIRDFKGIESKLDGRGNYTLGINEQIIFPEINIDAITKILGMNITFVTSAQSDEEGYALLKEFGLPFKNAKKQN</sequence>
<name>RL5_PORG3</name>
<protein>
    <recommendedName>
        <fullName evidence="1">Large ribosomal subunit protein uL5</fullName>
    </recommendedName>
    <alternativeName>
        <fullName evidence="2">50S ribosomal protein L5</fullName>
    </alternativeName>
</protein>
<accession>B2RLY0</accession>
<feature type="chain" id="PRO_1000142430" description="Large ribosomal subunit protein uL5">
    <location>
        <begin position="1"/>
        <end position="186"/>
    </location>
</feature>
<comment type="function">
    <text evidence="1">This is one of the proteins that bind and probably mediate the attachment of the 5S RNA into the large ribosomal subunit, where it forms part of the central protuberance. In the 70S ribosome it contacts protein S13 of the 30S subunit (bridge B1b), connecting the 2 subunits; this bridge is implicated in subunit movement. Contacts the P site tRNA; the 5S rRNA and some of its associated proteins might help stabilize positioning of ribosome-bound tRNAs.</text>
</comment>
<comment type="subunit">
    <text evidence="1">Part of the 50S ribosomal subunit; part of the 5S rRNA/L5/L18/L25 subcomplex. Contacts the 5S rRNA and the P site tRNA. Forms a bridge to the 30S subunit in the 70S ribosome.</text>
</comment>
<comment type="similarity">
    <text evidence="1">Belongs to the universal ribosomal protein uL5 family.</text>
</comment>